<accession>B2HFV4</accession>
<keyword id="KW-0067">ATP-binding</keyword>
<keyword id="KW-0436">Ligase</keyword>
<keyword id="KW-0460">Magnesium</keyword>
<keyword id="KW-0479">Metal-binding</keyword>
<keyword id="KW-0547">Nucleotide-binding</keyword>
<keyword id="KW-1185">Reference proteome</keyword>
<keyword id="KW-0833">Ubl conjugation pathway</keyword>
<sequence length="452" mass="51289">MQRRIMGIETEFGVTCTFHGHRRLSPDEVARYLFRRVVSWGRSSNVFLRNGARLYLDVGSHPEYATAECDSLVQLVTHDRAGEWVLEDLLVDAEQRLADEGIGGDIYLFKNNTDSAGNSYGCHENYLIVRAGEFSRISDVLLPFLVTRQLICGAGKVLQTPKAATFCLSQRAEHIWEGVSSATTRSRPIINTRDEPHADAEKYRRLHVIVGDSNMCETTTMLKVGTASLVLEMIEAGVPFRDFSLDNPIRAIREVSHDVTGRRPVRLAGGRQASALDIQREYYSRAVEHLQTREPNAQVEQVVDLWGRQLDAVESQDFAKVDTEIDWVIKRKLFQRYQDRYNMELSDPKIAQLDLAYHDIKRGRGVFDLLQRKGLATRVTTDEEIADAVDNPPQTTRARLRGEFISAAQAAGRDFTVDWVHLKLNDQAQRTVLCKDPFRAVDERVKRLIASM</sequence>
<comment type="function">
    <text evidence="1">Catalyzes the covalent attachment of the prokaryotic ubiquitin-like protein modifier Pup to the proteasomal substrate proteins, thereby targeting them for proteasomal degradation. This tagging system is termed pupylation. The ligation reaction involves the side-chain carboxylate of the C-terminal glutamate of Pup and the side-chain amino group of a substrate lysine.</text>
</comment>
<comment type="catalytic activity">
    <reaction evidence="1">
        <text>ATP + [prokaryotic ubiquitin-like protein]-L-glutamate + [protein]-L-lysine = ADP + phosphate + N(6)-([prokaryotic ubiquitin-like protein]-gamma-L-glutamyl)-[protein]-L-lysine.</text>
        <dbReference type="EC" id="6.3.1.19"/>
    </reaction>
</comment>
<comment type="pathway">
    <text evidence="1">Protein degradation; proteasomal Pup-dependent pathway.</text>
</comment>
<comment type="pathway">
    <text evidence="1">Protein modification; protein pupylation.</text>
</comment>
<comment type="miscellaneous">
    <text evidence="1">The reaction mechanism probably proceeds via the activation of Pup by phosphorylation of its C-terminal glutamate, which is then subject to nucleophilic attack by the substrate lysine, resulting in an isopeptide bond and the release of phosphate as a good leaving group.</text>
</comment>
<comment type="similarity">
    <text evidence="1">Belongs to the Pup ligase/Pup deamidase family. Pup-conjugating enzyme subfamily.</text>
</comment>
<feature type="chain" id="PRO_0000395929" description="Pup--protein ligase">
    <location>
        <begin position="1"/>
        <end position="452"/>
    </location>
</feature>
<feature type="active site" description="Proton acceptor" evidence="1">
    <location>
        <position position="57"/>
    </location>
</feature>
<feature type="binding site" evidence="1">
    <location>
        <position position="9"/>
    </location>
    <ligand>
        <name>Mg(2+)</name>
        <dbReference type="ChEBI" id="CHEBI:18420"/>
    </ligand>
</feature>
<feature type="binding site" evidence="1">
    <location>
        <position position="53"/>
    </location>
    <ligand>
        <name>ATP</name>
        <dbReference type="ChEBI" id="CHEBI:30616"/>
    </ligand>
</feature>
<feature type="binding site" evidence="1">
    <location>
        <position position="55"/>
    </location>
    <ligand>
        <name>Mg(2+)</name>
        <dbReference type="ChEBI" id="CHEBI:18420"/>
    </ligand>
</feature>
<feature type="binding site" evidence="1">
    <location>
        <position position="63"/>
    </location>
    <ligand>
        <name>Mg(2+)</name>
        <dbReference type="ChEBI" id="CHEBI:18420"/>
    </ligand>
</feature>
<feature type="binding site" evidence="1">
    <location>
        <position position="66"/>
    </location>
    <ligand>
        <name>ATP</name>
        <dbReference type="ChEBI" id="CHEBI:30616"/>
    </ligand>
</feature>
<feature type="binding site" evidence="1">
    <location>
        <position position="419"/>
    </location>
    <ligand>
        <name>ATP</name>
        <dbReference type="ChEBI" id="CHEBI:30616"/>
    </ligand>
</feature>
<evidence type="ECO:0000255" key="1">
    <source>
        <dbReference type="HAMAP-Rule" id="MF_02111"/>
    </source>
</evidence>
<gene>
    <name evidence="1" type="primary">pafA</name>
    <name type="ordered locus">MMAR_3083</name>
</gene>
<name>PAFA_MYCMM</name>
<dbReference type="EC" id="6.3.1.19" evidence="1"/>
<dbReference type="EMBL" id="CP000854">
    <property type="protein sequence ID" value="ACC41518.1"/>
    <property type="molecule type" value="Genomic_DNA"/>
</dbReference>
<dbReference type="RefSeq" id="WP_011740316.1">
    <property type="nucleotide sequence ID" value="NC_010612.1"/>
</dbReference>
<dbReference type="SMR" id="B2HFV4"/>
<dbReference type="STRING" id="216594.MMAR_3083"/>
<dbReference type="GeneID" id="34342823"/>
<dbReference type="KEGG" id="mmi:MMAR_3083"/>
<dbReference type="eggNOG" id="COG0638">
    <property type="taxonomic scope" value="Bacteria"/>
</dbReference>
<dbReference type="HOGENOM" id="CLU_040524_0_1_11"/>
<dbReference type="OrthoDB" id="9760627at2"/>
<dbReference type="UniPathway" id="UPA00997"/>
<dbReference type="UniPathway" id="UPA00998"/>
<dbReference type="Proteomes" id="UP000001190">
    <property type="component" value="Chromosome"/>
</dbReference>
<dbReference type="GO" id="GO:0005524">
    <property type="term" value="F:ATP binding"/>
    <property type="evidence" value="ECO:0007669"/>
    <property type="project" value="UniProtKB-UniRule"/>
</dbReference>
<dbReference type="GO" id="GO:0016879">
    <property type="term" value="F:ligase activity, forming carbon-nitrogen bonds"/>
    <property type="evidence" value="ECO:0007669"/>
    <property type="project" value="InterPro"/>
</dbReference>
<dbReference type="GO" id="GO:0000287">
    <property type="term" value="F:magnesium ion binding"/>
    <property type="evidence" value="ECO:0007669"/>
    <property type="project" value="UniProtKB-UniRule"/>
</dbReference>
<dbReference type="GO" id="GO:0019787">
    <property type="term" value="F:ubiquitin-like protein transferase activity"/>
    <property type="evidence" value="ECO:0007669"/>
    <property type="project" value="UniProtKB-UniRule"/>
</dbReference>
<dbReference type="GO" id="GO:0019941">
    <property type="term" value="P:modification-dependent protein catabolic process"/>
    <property type="evidence" value="ECO:0007669"/>
    <property type="project" value="UniProtKB-UniRule"/>
</dbReference>
<dbReference type="GO" id="GO:0010498">
    <property type="term" value="P:proteasomal protein catabolic process"/>
    <property type="evidence" value="ECO:0007669"/>
    <property type="project" value="UniProtKB-UniRule"/>
</dbReference>
<dbReference type="GO" id="GO:0070490">
    <property type="term" value="P:protein pupylation"/>
    <property type="evidence" value="ECO:0007669"/>
    <property type="project" value="UniProtKB-UniRule"/>
</dbReference>
<dbReference type="HAMAP" id="MF_02111">
    <property type="entry name" value="Pup_ligase"/>
    <property type="match status" value="1"/>
</dbReference>
<dbReference type="InterPro" id="IPR022279">
    <property type="entry name" value="Pup_ligase"/>
</dbReference>
<dbReference type="InterPro" id="IPR004347">
    <property type="entry name" value="Pup_ligase/deamidase"/>
</dbReference>
<dbReference type="NCBIfam" id="TIGR03686">
    <property type="entry name" value="pupylate_PafA"/>
    <property type="match status" value="1"/>
</dbReference>
<dbReference type="PANTHER" id="PTHR42307">
    <property type="entry name" value="PUP DEAMIDASE/DEPUPYLASE"/>
    <property type="match status" value="1"/>
</dbReference>
<dbReference type="PANTHER" id="PTHR42307:SF3">
    <property type="entry name" value="PUP--PROTEIN LIGASE"/>
    <property type="match status" value="1"/>
</dbReference>
<dbReference type="Pfam" id="PF03136">
    <property type="entry name" value="Pup_ligase"/>
    <property type="match status" value="1"/>
</dbReference>
<dbReference type="PIRSF" id="PIRSF018077">
    <property type="entry name" value="UCP018077"/>
    <property type="match status" value="1"/>
</dbReference>
<protein>
    <recommendedName>
        <fullName evidence="1">Pup--protein ligase</fullName>
        <ecNumber evidence="1">6.3.1.19</ecNumber>
    </recommendedName>
    <alternativeName>
        <fullName evidence="1">Proteasome accessory factor A</fullName>
    </alternativeName>
    <alternativeName>
        <fullName evidence="1">Pup-conjugating enzyme</fullName>
    </alternativeName>
</protein>
<organism>
    <name type="scientific">Mycobacterium marinum (strain ATCC BAA-535 / M)</name>
    <dbReference type="NCBI Taxonomy" id="216594"/>
    <lineage>
        <taxon>Bacteria</taxon>
        <taxon>Bacillati</taxon>
        <taxon>Actinomycetota</taxon>
        <taxon>Actinomycetes</taxon>
        <taxon>Mycobacteriales</taxon>
        <taxon>Mycobacteriaceae</taxon>
        <taxon>Mycobacterium</taxon>
        <taxon>Mycobacterium ulcerans group</taxon>
    </lineage>
</organism>
<proteinExistence type="inferred from homology"/>
<reference key="1">
    <citation type="journal article" date="2008" name="Genome Res.">
        <title>Insights from the complete genome sequence of Mycobacterium marinum on the evolution of Mycobacterium tuberculosis.</title>
        <authorList>
            <person name="Stinear T.P."/>
            <person name="Seemann T."/>
            <person name="Harrison P.F."/>
            <person name="Jenkin G.A."/>
            <person name="Davies J.K."/>
            <person name="Johnson P.D."/>
            <person name="Abdellah Z."/>
            <person name="Arrowsmith C."/>
            <person name="Chillingworth T."/>
            <person name="Churcher C."/>
            <person name="Clarke K."/>
            <person name="Cronin A."/>
            <person name="Davis P."/>
            <person name="Goodhead I."/>
            <person name="Holroyd N."/>
            <person name="Jagels K."/>
            <person name="Lord A."/>
            <person name="Moule S."/>
            <person name="Mungall K."/>
            <person name="Norbertczak H."/>
            <person name="Quail M.A."/>
            <person name="Rabbinowitsch E."/>
            <person name="Walker D."/>
            <person name="White B."/>
            <person name="Whitehead S."/>
            <person name="Small P.L."/>
            <person name="Brosch R."/>
            <person name="Ramakrishnan L."/>
            <person name="Fischbach M.A."/>
            <person name="Parkhill J."/>
            <person name="Cole S.T."/>
        </authorList>
    </citation>
    <scope>NUCLEOTIDE SEQUENCE [LARGE SCALE GENOMIC DNA]</scope>
    <source>
        <strain>ATCC BAA-535 / M</strain>
    </source>
</reference>